<feature type="signal peptide" evidence="1">
    <location>
        <begin position="1"/>
        <end position="28"/>
    </location>
</feature>
<feature type="chain" id="PRO_0000293087" description="Lectin">
    <location>
        <begin position="29"/>
        <end position="201"/>
    </location>
</feature>
<feature type="chain" id="PRO_0000293088" description="Lectin 10 kDa peptide">
    <location>
        <begin position="29"/>
        <end position="122"/>
    </location>
</feature>
<feature type="chain" id="PRO_0000293089" description="Lectin 8 kDa peptide">
    <location>
        <begin position="123"/>
        <end position="201"/>
    </location>
</feature>
<feature type="propeptide" id="PRO_0000293090" evidence="1">
    <location>
        <begin position="202"/>
        <end position="227"/>
    </location>
</feature>
<feature type="domain" description="Chitin-binding type-1 1" evidence="3">
    <location>
        <begin position="29"/>
        <end position="70"/>
    </location>
</feature>
<feature type="domain" description="Chitin-binding type-1 2" evidence="3">
    <location>
        <begin position="71"/>
        <end position="113"/>
    </location>
</feature>
<feature type="domain" description="Chitin-binding type-1 3" evidence="3">
    <location>
        <begin position="114"/>
        <end position="156"/>
    </location>
</feature>
<feature type="domain" description="Chitin-binding type-1 4" evidence="3">
    <location>
        <begin position="157"/>
        <end position="199"/>
    </location>
</feature>
<feature type="binding site" evidence="1">
    <location>
        <begin position="38"/>
        <end position="40"/>
    </location>
    <ligand>
        <name>substrate</name>
    </ligand>
</feature>
<feature type="binding site" evidence="1">
    <location>
        <begin position="90"/>
        <end position="101"/>
    </location>
    <ligand>
        <name>substrate</name>
    </ligand>
</feature>
<feature type="binding site" evidence="1">
    <location>
        <begin position="142"/>
        <end position="143"/>
    </location>
    <ligand>
        <name>substrate</name>
    </ligand>
</feature>
<feature type="modified residue" description="Pyrrolidone carboxylic acid" evidence="1">
    <location>
        <position position="29"/>
    </location>
</feature>
<feature type="glycosylation site" description="N-linked (GlcNAc...) asparagine" evidence="2">
    <location>
        <position position="211"/>
    </location>
</feature>
<feature type="disulfide bond" evidence="3">
    <location>
        <begin position="31"/>
        <end position="46"/>
    </location>
</feature>
<feature type="disulfide bond" evidence="3">
    <location>
        <begin position="40"/>
        <end position="52"/>
    </location>
</feature>
<feature type="disulfide bond" evidence="3">
    <location>
        <begin position="45"/>
        <end position="59"/>
    </location>
</feature>
<feature type="disulfide bond" evidence="3">
    <location>
        <begin position="63"/>
        <end position="68"/>
    </location>
</feature>
<feature type="disulfide bond" evidence="3">
    <location>
        <begin position="74"/>
        <end position="89"/>
    </location>
</feature>
<feature type="disulfide bond" evidence="3">
    <location>
        <begin position="83"/>
        <end position="95"/>
    </location>
</feature>
<feature type="disulfide bond" evidence="3">
    <location>
        <begin position="88"/>
        <end position="102"/>
    </location>
</feature>
<feature type="disulfide bond" evidence="3">
    <location>
        <begin position="106"/>
        <end position="111"/>
    </location>
</feature>
<feature type="disulfide bond" evidence="3">
    <location>
        <begin position="117"/>
        <end position="132"/>
    </location>
</feature>
<feature type="disulfide bond" evidence="3">
    <location>
        <begin position="126"/>
        <end position="138"/>
    </location>
</feature>
<feature type="disulfide bond" evidence="3">
    <location>
        <begin position="131"/>
        <end position="145"/>
    </location>
</feature>
<feature type="disulfide bond" evidence="3">
    <location>
        <begin position="149"/>
        <end position="154"/>
    </location>
</feature>
<feature type="disulfide bond" evidence="3">
    <location>
        <begin position="160"/>
        <end position="175"/>
    </location>
</feature>
<feature type="disulfide bond" evidence="3">
    <location>
        <begin position="169"/>
        <end position="181"/>
    </location>
</feature>
<feature type="disulfide bond" evidence="3">
    <location>
        <begin position="174"/>
        <end position="188"/>
    </location>
</feature>
<feature type="disulfide bond" evidence="3">
    <location>
        <begin position="192"/>
        <end position="197"/>
    </location>
</feature>
<feature type="sequence conflict" description="In Ref. 3; AAD27889." evidence="4" ref="3">
    <original>S</original>
    <variation>R</variation>
    <location>
        <position position="119"/>
    </location>
</feature>
<gene>
    <name type="ORF">OsI_014491</name>
    <name type="ORF">OSIGBa0132O24</name>
</gene>
<sequence length="227" mass="22726">MTMTSTTTKAMAMAAAVLAAAAVAATNAQTCGKQNDGMICPHNLCCSQFGYCGLGRDYCGTGCQSGACCSSQRCGSQGGGATCSNNQCCSQYGYCGFGSEYCGSGCQNGPCRADIKCGSNANGELCPNNMCCSQWGYCGLGSEFCGNGCQSGACCPEKRCGKQAGGDKCPNNFCCSAGGYCGLGGNYCGSGCQSGGCYKGGDGMAAILANNQSVSFEGIIESVAELV</sequence>
<name>AGI_ORYSI</name>
<proteinExistence type="inferred from homology"/>
<comment type="function">
    <text>N-acetyl-D-glucosamine binding lectin.</text>
</comment>
<comment type="sequence caution" evidence="4">
    <conflict type="erroneous initiation">
        <sequence resource="EMBL-CDS" id="CAH66099"/>
    </conflict>
</comment>
<organism>
    <name type="scientific">Oryza sativa subsp. indica</name>
    <name type="common">Rice</name>
    <dbReference type="NCBI Taxonomy" id="39946"/>
    <lineage>
        <taxon>Eukaryota</taxon>
        <taxon>Viridiplantae</taxon>
        <taxon>Streptophyta</taxon>
        <taxon>Embryophyta</taxon>
        <taxon>Tracheophyta</taxon>
        <taxon>Spermatophyta</taxon>
        <taxon>Magnoliopsida</taxon>
        <taxon>Liliopsida</taxon>
        <taxon>Poales</taxon>
        <taxon>Poaceae</taxon>
        <taxon>BOP clade</taxon>
        <taxon>Oryzoideae</taxon>
        <taxon>Oryzeae</taxon>
        <taxon>Oryzinae</taxon>
        <taxon>Oryza</taxon>
        <taxon>Oryza sativa</taxon>
    </lineage>
</organism>
<accession>Q01MB6</accession>
<accession>A2XQZ8</accession>
<accession>P11219</accession>
<accession>Q7FZU3</accession>
<accession>Q7XRY8</accession>
<accession>Q9SBW5</accession>
<accession>Q9XFF3</accession>
<accession>Q9XFF4</accession>
<keyword id="KW-0147">Chitin-binding</keyword>
<keyword id="KW-1015">Disulfide bond</keyword>
<keyword id="KW-0325">Glycoprotein</keyword>
<keyword id="KW-0430">Lectin</keyword>
<keyword id="KW-0873">Pyrrolidone carboxylic acid</keyword>
<keyword id="KW-1185">Reference proteome</keyword>
<keyword id="KW-0677">Repeat</keyword>
<keyword id="KW-0732">Signal</keyword>
<reference key="1">
    <citation type="journal article" date="2002" name="Nature">
        <title>Sequence and analysis of rice chromosome 4.</title>
        <authorList>
            <person name="Feng Q."/>
            <person name="Zhang Y."/>
            <person name="Hao P."/>
            <person name="Wang S."/>
            <person name="Fu G."/>
            <person name="Huang Y."/>
            <person name="Li Y."/>
            <person name="Zhu J."/>
            <person name="Liu Y."/>
            <person name="Hu X."/>
            <person name="Jia P."/>
            <person name="Zhang Y."/>
            <person name="Zhao Q."/>
            <person name="Ying K."/>
            <person name="Yu S."/>
            <person name="Tang Y."/>
            <person name="Weng Q."/>
            <person name="Zhang L."/>
            <person name="Lu Y."/>
            <person name="Mu J."/>
            <person name="Lu Y."/>
            <person name="Zhang L.S."/>
            <person name="Yu Z."/>
            <person name="Fan D."/>
            <person name="Liu X."/>
            <person name="Lu T."/>
            <person name="Li C."/>
            <person name="Wu Y."/>
            <person name="Sun T."/>
            <person name="Lei H."/>
            <person name="Li T."/>
            <person name="Hu H."/>
            <person name="Guan J."/>
            <person name="Wu M."/>
            <person name="Zhang R."/>
            <person name="Zhou B."/>
            <person name="Chen Z."/>
            <person name="Chen L."/>
            <person name="Jin Z."/>
            <person name="Wang R."/>
            <person name="Yin H."/>
            <person name="Cai Z."/>
            <person name="Ren S."/>
            <person name="Lv G."/>
            <person name="Gu W."/>
            <person name="Zhu G."/>
            <person name="Tu Y."/>
            <person name="Jia J."/>
            <person name="Zhang Y."/>
            <person name="Chen J."/>
            <person name="Kang H."/>
            <person name="Chen X."/>
            <person name="Shao C."/>
            <person name="Sun Y."/>
            <person name="Hu Q."/>
            <person name="Zhang X."/>
            <person name="Zhang W."/>
            <person name="Wang L."/>
            <person name="Ding C."/>
            <person name="Sheng H."/>
            <person name="Gu J."/>
            <person name="Chen S."/>
            <person name="Ni L."/>
            <person name="Zhu F."/>
            <person name="Chen W."/>
            <person name="Lan L."/>
            <person name="Lai Y."/>
            <person name="Cheng Z."/>
            <person name="Gu M."/>
            <person name="Jiang J."/>
            <person name="Li J."/>
            <person name="Hong G."/>
            <person name="Xue Y."/>
            <person name="Han B."/>
        </authorList>
    </citation>
    <scope>NUCLEOTIDE SEQUENCE [LARGE SCALE GENOMIC DNA]</scope>
    <source>
        <strain>cv. Guang-Lu-Ai No.4</strain>
    </source>
</reference>
<reference key="2">
    <citation type="journal article" date="2005" name="PLoS Biol.">
        <title>The genomes of Oryza sativa: a history of duplications.</title>
        <authorList>
            <person name="Yu J."/>
            <person name="Wang J."/>
            <person name="Lin W."/>
            <person name="Li S."/>
            <person name="Li H."/>
            <person name="Zhou J."/>
            <person name="Ni P."/>
            <person name="Dong W."/>
            <person name="Hu S."/>
            <person name="Zeng C."/>
            <person name="Zhang J."/>
            <person name="Zhang Y."/>
            <person name="Li R."/>
            <person name="Xu Z."/>
            <person name="Li S."/>
            <person name="Li X."/>
            <person name="Zheng H."/>
            <person name="Cong L."/>
            <person name="Lin L."/>
            <person name="Yin J."/>
            <person name="Geng J."/>
            <person name="Li G."/>
            <person name="Shi J."/>
            <person name="Liu J."/>
            <person name="Lv H."/>
            <person name="Li J."/>
            <person name="Wang J."/>
            <person name="Deng Y."/>
            <person name="Ran L."/>
            <person name="Shi X."/>
            <person name="Wang X."/>
            <person name="Wu Q."/>
            <person name="Li C."/>
            <person name="Ren X."/>
            <person name="Wang J."/>
            <person name="Wang X."/>
            <person name="Li D."/>
            <person name="Liu D."/>
            <person name="Zhang X."/>
            <person name="Ji Z."/>
            <person name="Zhao W."/>
            <person name="Sun Y."/>
            <person name="Zhang Z."/>
            <person name="Bao J."/>
            <person name="Han Y."/>
            <person name="Dong L."/>
            <person name="Ji J."/>
            <person name="Chen P."/>
            <person name="Wu S."/>
            <person name="Liu J."/>
            <person name="Xiao Y."/>
            <person name="Bu D."/>
            <person name="Tan J."/>
            <person name="Yang L."/>
            <person name="Ye C."/>
            <person name="Zhang J."/>
            <person name="Xu J."/>
            <person name="Zhou Y."/>
            <person name="Yu Y."/>
            <person name="Zhang B."/>
            <person name="Zhuang S."/>
            <person name="Wei H."/>
            <person name="Liu B."/>
            <person name="Lei M."/>
            <person name="Yu H."/>
            <person name="Li Y."/>
            <person name="Xu H."/>
            <person name="Wei S."/>
            <person name="He X."/>
            <person name="Fang L."/>
            <person name="Zhang Z."/>
            <person name="Zhang Y."/>
            <person name="Huang X."/>
            <person name="Su Z."/>
            <person name="Tong W."/>
            <person name="Li J."/>
            <person name="Tong Z."/>
            <person name="Li S."/>
            <person name="Ye J."/>
            <person name="Wang L."/>
            <person name="Fang L."/>
            <person name="Lei T."/>
            <person name="Chen C.-S."/>
            <person name="Chen H.-C."/>
            <person name="Xu Z."/>
            <person name="Li H."/>
            <person name="Huang H."/>
            <person name="Zhang F."/>
            <person name="Xu H."/>
            <person name="Li N."/>
            <person name="Zhao C."/>
            <person name="Li S."/>
            <person name="Dong L."/>
            <person name="Huang Y."/>
            <person name="Li L."/>
            <person name="Xi Y."/>
            <person name="Qi Q."/>
            <person name="Li W."/>
            <person name="Zhang B."/>
            <person name="Hu W."/>
            <person name="Zhang Y."/>
            <person name="Tian X."/>
            <person name="Jiao Y."/>
            <person name="Liang X."/>
            <person name="Jin J."/>
            <person name="Gao L."/>
            <person name="Zheng W."/>
            <person name="Hao B."/>
            <person name="Liu S.-M."/>
            <person name="Wang W."/>
            <person name="Yuan L."/>
            <person name="Cao M."/>
            <person name="McDermott J."/>
            <person name="Samudrala R."/>
            <person name="Wang J."/>
            <person name="Wong G.K.-S."/>
            <person name="Yang H."/>
        </authorList>
    </citation>
    <scope>NUCLEOTIDE SEQUENCE [LARGE SCALE GENOMIC DNA]</scope>
    <source>
        <strain>cv. 93-11</strain>
    </source>
</reference>
<reference key="3">
    <citation type="submission" date="1999-04" db="EMBL/GenBank/DDBJ databases">
        <title>Molecular evolution of lectin gene in the genus Oryza.</title>
        <authorList>
            <person name="Hao Z."/>
            <person name="Liu Q."/>
            <person name="Shen D."/>
        </authorList>
    </citation>
    <scope>NUCLEOTIDE SEQUENCE [GENOMIC DNA] OF 28-227</scope>
</reference>
<protein>
    <recommendedName>
        <fullName>Lectin</fullName>
    </recommendedName>
    <alternativeName>
        <fullName>Agglutinin</fullName>
    </alternativeName>
    <component>
        <recommendedName>
            <fullName>Lectin 10 kDa peptide</fullName>
        </recommendedName>
    </component>
    <component>
        <recommendedName>
            <fullName>Lectin 8 kDa peptide</fullName>
        </recommendedName>
    </component>
</protein>
<evidence type="ECO:0000250" key="1"/>
<evidence type="ECO:0000255" key="2"/>
<evidence type="ECO:0000255" key="3">
    <source>
        <dbReference type="PROSITE-ProRule" id="PRU00261"/>
    </source>
</evidence>
<evidence type="ECO:0000305" key="4"/>
<dbReference type="EMBL" id="CR855052">
    <property type="protein sequence ID" value="CAH66099.1"/>
    <property type="status" value="ALT_INIT"/>
    <property type="molecule type" value="Genomic_DNA"/>
</dbReference>
<dbReference type="EMBL" id="CM000129">
    <property type="status" value="NOT_ANNOTATED_CDS"/>
    <property type="molecule type" value="Genomic_DNA"/>
</dbReference>
<dbReference type="EMBL" id="AF140681">
    <property type="protein sequence ID" value="AAD27889.1"/>
    <property type="molecule type" value="Genomic_DNA"/>
</dbReference>
<dbReference type="SMR" id="Q01MB6"/>
<dbReference type="STRING" id="39946.Q01MB6"/>
<dbReference type="CAZy" id="CBM18">
    <property type="family name" value="Carbohydrate-Binding Module Family 18"/>
</dbReference>
<dbReference type="EnsemblPlants" id="BGIOSGA015997-TA">
    <property type="protein sequence ID" value="BGIOSGA015997-PA"/>
    <property type="gene ID" value="BGIOSGA015997"/>
</dbReference>
<dbReference type="EnsemblPlants" id="OsGoSa_04g0002810.01">
    <property type="protein sequence ID" value="OsGoSa_04g0002810.01"/>
    <property type="gene ID" value="OsGoSa_04g0002810"/>
</dbReference>
<dbReference type="EnsemblPlants" id="OsKYG_04g0002980.01">
    <property type="protein sequence ID" value="OsKYG_04g0002980.01"/>
    <property type="gene ID" value="OsKYG_04g0002980"/>
</dbReference>
<dbReference type="EnsemblPlants" id="OsLima_04g0002740.01">
    <property type="protein sequence ID" value="OsLima_04g0002740.01"/>
    <property type="gene ID" value="OsLima_04g0002740"/>
</dbReference>
<dbReference type="EnsemblPlants" id="OsPr106_04g0002820.01">
    <property type="protein sequence ID" value="OsPr106_04g0002820.01"/>
    <property type="gene ID" value="OsPr106_04g0002820"/>
</dbReference>
<dbReference type="EnsemblPlants" id="OsZS97_04G002800_01">
    <property type="protein sequence ID" value="OsZS97_04G002800_01"/>
    <property type="gene ID" value="OsZS97_04G002800"/>
</dbReference>
<dbReference type="Gramene" id="BGIOSGA015997-TA">
    <property type="protein sequence ID" value="BGIOSGA015997-PA"/>
    <property type="gene ID" value="BGIOSGA015997"/>
</dbReference>
<dbReference type="Gramene" id="OsGoSa_04g0002810.01">
    <property type="protein sequence ID" value="OsGoSa_04g0002810.01"/>
    <property type="gene ID" value="OsGoSa_04g0002810"/>
</dbReference>
<dbReference type="Gramene" id="OsKYG_04g0002980.01">
    <property type="protein sequence ID" value="OsKYG_04g0002980.01"/>
    <property type="gene ID" value="OsKYG_04g0002980"/>
</dbReference>
<dbReference type="Gramene" id="OsLima_04g0002740.01">
    <property type="protein sequence ID" value="OsLima_04g0002740.01"/>
    <property type="gene ID" value="OsLima_04g0002740"/>
</dbReference>
<dbReference type="Gramene" id="OsPr106_04g0002820.01">
    <property type="protein sequence ID" value="OsPr106_04g0002820.01"/>
    <property type="gene ID" value="OsPr106_04g0002820"/>
</dbReference>
<dbReference type="Gramene" id="OsZS97_04G002800_01">
    <property type="protein sequence ID" value="OsZS97_04G002800_01"/>
    <property type="gene ID" value="OsZS97_04G002800"/>
</dbReference>
<dbReference type="HOGENOM" id="CLU_112193_0_0_1"/>
<dbReference type="OMA" id="CGAANWC"/>
<dbReference type="OrthoDB" id="617225at2759"/>
<dbReference type="Proteomes" id="UP000007015">
    <property type="component" value="Chromosome 4"/>
</dbReference>
<dbReference type="GO" id="GO:0030246">
    <property type="term" value="F:carbohydrate binding"/>
    <property type="evidence" value="ECO:0007669"/>
    <property type="project" value="UniProtKB-KW"/>
</dbReference>
<dbReference type="GO" id="GO:0008061">
    <property type="term" value="F:chitin binding"/>
    <property type="evidence" value="ECO:0007669"/>
    <property type="project" value="UniProtKB-KW"/>
</dbReference>
<dbReference type="CDD" id="cd00035">
    <property type="entry name" value="ChtBD1"/>
    <property type="match status" value="4"/>
</dbReference>
<dbReference type="FunFam" id="3.30.60.10:FF:000006">
    <property type="entry name" value="Agglutinin isolectin 1"/>
    <property type="match status" value="2"/>
</dbReference>
<dbReference type="Gene3D" id="3.30.60.10">
    <property type="entry name" value="Endochitinase-like"/>
    <property type="match status" value="4"/>
</dbReference>
<dbReference type="InterPro" id="IPR001002">
    <property type="entry name" value="Chitin-bd_1"/>
</dbReference>
<dbReference type="InterPro" id="IPR018371">
    <property type="entry name" value="Chitin-binding_1_CS"/>
</dbReference>
<dbReference type="InterPro" id="IPR036861">
    <property type="entry name" value="Endochitinase-like_sf"/>
</dbReference>
<dbReference type="PANTHER" id="PTHR47849">
    <property type="entry name" value="CHITIN-BINDING LECTIN 1"/>
    <property type="match status" value="1"/>
</dbReference>
<dbReference type="PANTHER" id="PTHR47849:SF8">
    <property type="entry name" value="LECTIN"/>
    <property type="match status" value="1"/>
</dbReference>
<dbReference type="Pfam" id="PF00187">
    <property type="entry name" value="Chitin_bind_1"/>
    <property type="match status" value="4"/>
</dbReference>
<dbReference type="PRINTS" id="PR00451">
    <property type="entry name" value="CHITINBINDNG"/>
</dbReference>
<dbReference type="SMART" id="SM00270">
    <property type="entry name" value="ChtBD1"/>
    <property type="match status" value="4"/>
</dbReference>
<dbReference type="SUPFAM" id="SSF57016">
    <property type="entry name" value="Plant lectins/antimicrobial peptides"/>
    <property type="match status" value="4"/>
</dbReference>
<dbReference type="PROSITE" id="PS00026">
    <property type="entry name" value="CHIT_BIND_I_1"/>
    <property type="match status" value="4"/>
</dbReference>
<dbReference type="PROSITE" id="PS50941">
    <property type="entry name" value="CHIT_BIND_I_2"/>
    <property type="match status" value="4"/>
</dbReference>